<comment type="function">
    <text evidence="1">The heterodimer acts as both an ATP-dependent DNA helicase and an ATP-dependent, dual-direction single-stranded exonuclease. Recognizes the chi site generating a DNA molecule suitable for the initiation of homologous recombination. The AddB subunit has 5' -&gt; 3' nuclease activity but not helicase activity.</text>
</comment>
<comment type="cofactor">
    <cofactor evidence="1">
        <name>Mg(2+)</name>
        <dbReference type="ChEBI" id="CHEBI:18420"/>
    </cofactor>
</comment>
<comment type="cofactor">
    <cofactor evidence="1">
        <name>[4Fe-4S] cluster</name>
        <dbReference type="ChEBI" id="CHEBI:49883"/>
    </cofactor>
    <text evidence="1">Binds 1 [4Fe-4S] cluster.</text>
</comment>
<comment type="subunit">
    <text evidence="1">Heterodimer of AddA and AddB.</text>
</comment>
<comment type="miscellaneous">
    <text evidence="1">Despite having conserved helicase domains, this subunit does not have helicase activity.</text>
</comment>
<comment type="similarity">
    <text evidence="1">Belongs to the helicase family. AddB/RexB type 1 subfamily.</text>
</comment>
<reference key="1">
    <citation type="journal article" date="2009" name="J. Bacteriol.">
        <title>Complete genome sequence of the extremophilic Bacillus cereus strain Q1 with industrial applications.</title>
        <authorList>
            <person name="Xiong Z."/>
            <person name="Jiang Y."/>
            <person name="Qi D."/>
            <person name="Lu H."/>
            <person name="Yang F."/>
            <person name="Yang J."/>
            <person name="Chen L."/>
            <person name="Sun L."/>
            <person name="Xu X."/>
            <person name="Xue Y."/>
            <person name="Zhu Y."/>
            <person name="Jin Q."/>
        </authorList>
    </citation>
    <scope>NUCLEOTIDE SEQUENCE [LARGE SCALE GENOMIC DNA]</scope>
    <source>
        <strain>Q1</strain>
    </source>
</reference>
<evidence type="ECO:0000255" key="1">
    <source>
        <dbReference type="HAMAP-Rule" id="MF_01452"/>
    </source>
</evidence>
<gene>
    <name evidence="1" type="primary">addB</name>
    <name type="ordered locus">BCQ_1200</name>
</gene>
<proteinExistence type="inferred from homology"/>
<dbReference type="EC" id="3.1.-.-" evidence="1"/>
<dbReference type="EMBL" id="CP000227">
    <property type="protein sequence ID" value="ACM11630.1"/>
    <property type="molecule type" value="Genomic_DNA"/>
</dbReference>
<dbReference type="SMR" id="B9ITE8"/>
<dbReference type="KEGG" id="bcq:BCQ_1200"/>
<dbReference type="HOGENOM" id="CLU_007838_0_0_9"/>
<dbReference type="Proteomes" id="UP000000441">
    <property type="component" value="Chromosome"/>
</dbReference>
<dbReference type="GO" id="GO:0051539">
    <property type="term" value="F:4 iron, 4 sulfur cluster binding"/>
    <property type="evidence" value="ECO:0007669"/>
    <property type="project" value="UniProtKB-KW"/>
</dbReference>
<dbReference type="GO" id="GO:0008409">
    <property type="term" value="F:5'-3' exonuclease activity"/>
    <property type="evidence" value="ECO:0007669"/>
    <property type="project" value="UniProtKB-UniRule"/>
</dbReference>
<dbReference type="GO" id="GO:0005524">
    <property type="term" value="F:ATP binding"/>
    <property type="evidence" value="ECO:0007669"/>
    <property type="project" value="UniProtKB-UniRule"/>
</dbReference>
<dbReference type="GO" id="GO:0003690">
    <property type="term" value="F:double-stranded DNA binding"/>
    <property type="evidence" value="ECO:0007669"/>
    <property type="project" value="UniProtKB-UniRule"/>
</dbReference>
<dbReference type="GO" id="GO:0004386">
    <property type="term" value="F:helicase activity"/>
    <property type="evidence" value="ECO:0007669"/>
    <property type="project" value="UniProtKB-KW"/>
</dbReference>
<dbReference type="GO" id="GO:0046872">
    <property type="term" value="F:metal ion binding"/>
    <property type="evidence" value="ECO:0007669"/>
    <property type="project" value="UniProtKB-KW"/>
</dbReference>
<dbReference type="GO" id="GO:0000724">
    <property type="term" value="P:double-strand break repair via homologous recombination"/>
    <property type="evidence" value="ECO:0007669"/>
    <property type="project" value="UniProtKB-UniRule"/>
</dbReference>
<dbReference type="FunFam" id="3.40.50.300:FF:001679">
    <property type="entry name" value="ATP-dependent helicase/deoxyribonuclease subunit B"/>
    <property type="match status" value="1"/>
</dbReference>
<dbReference type="FunFam" id="3.40.50.300:FF:001704">
    <property type="entry name" value="ATP-dependent helicase/deoxyribonuclease subunit B"/>
    <property type="match status" value="1"/>
</dbReference>
<dbReference type="FunFam" id="3.40.50.300:FF:001705">
    <property type="entry name" value="ATP-dependent helicase/deoxyribonuclease subunit B"/>
    <property type="match status" value="1"/>
</dbReference>
<dbReference type="FunFam" id="3.40.50.300:FF:001739">
    <property type="entry name" value="ATP-dependent helicase/deoxyribonuclease subunit B"/>
    <property type="match status" value="1"/>
</dbReference>
<dbReference type="FunFam" id="3.90.320.10:FF:000006">
    <property type="entry name" value="ATP-dependent helicase/deoxyribonuclease subunit B"/>
    <property type="match status" value="1"/>
</dbReference>
<dbReference type="Gene3D" id="3.90.320.10">
    <property type="match status" value="1"/>
</dbReference>
<dbReference type="Gene3D" id="6.10.140.1030">
    <property type="match status" value="1"/>
</dbReference>
<dbReference type="Gene3D" id="3.40.50.300">
    <property type="entry name" value="P-loop containing nucleotide triphosphate hydrolases"/>
    <property type="match status" value="4"/>
</dbReference>
<dbReference type="HAMAP" id="MF_01452">
    <property type="entry name" value="AddB_type1"/>
    <property type="match status" value="1"/>
</dbReference>
<dbReference type="InterPro" id="IPR049035">
    <property type="entry name" value="ADDB_N"/>
</dbReference>
<dbReference type="InterPro" id="IPR014140">
    <property type="entry name" value="DNA_helicase_suAddB"/>
</dbReference>
<dbReference type="InterPro" id="IPR014017">
    <property type="entry name" value="DNA_helicase_UvrD-like_C"/>
</dbReference>
<dbReference type="InterPro" id="IPR027417">
    <property type="entry name" value="P-loop_NTPase"/>
</dbReference>
<dbReference type="InterPro" id="IPR011604">
    <property type="entry name" value="PDDEXK-like_dom_sf"/>
</dbReference>
<dbReference type="InterPro" id="IPR038726">
    <property type="entry name" value="PDDEXK_AddAB-type"/>
</dbReference>
<dbReference type="NCBIfam" id="TIGR02773">
    <property type="entry name" value="addB_Gpos"/>
    <property type="match status" value="1"/>
</dbReference>
<dbReference type="PANTHER" id="PTHR30591">
    <property type="entry name" value="RECBCD ENZYME SUBUNIT RECC"/>
    <property type="match status" value="1"/>
</dbReference>
<dbReference type="PANTHER" id="PTHR30591:SF1">
    <property type="entry name" value="RECBCD ENZYME SUBUNIT RECC"/>
    <property type="match status" value="1"/>
</dbReference>
<dbReference type="Pfam" id="PF21445">
    <property type="entry name" value="ADDB_N"/>
    <property type="match status" value="1"/>
</dbReference>
<dbReference type="Pfam" id="PF12705">
    <property type="entry name" value="PDDEXK_1"/>
    <property type="match status" value="1"/>
</dbReference>
<dbReference type="Pfam" id="PF13361">
    <property type="entry name" value="UvrD_C"/>
    <property type="match status" value="1"/>
</dbReference>
<dbReference type="SUPFAM" id="SSF52540">
    <property type="entry name" value="P-loop containing nucleoside triphosphate hydrolases"/>
    <property type="match status" value="2"/>
</dbReference>
<dbReference type="PROSITE" id="PS51198">
    <property type="entry name" value="UVRD_HELICASE_ATP_BIND"/>
    <property type="match status" value="1"/>
</dbReference>
<dbReference type="PROSITE" id="PS51217">
    <property type="entry name" value="UVRD_HELICASE_CTER"/>
    <property type="match status" value="1"/>
</dbReference>
<protein>
    <recommendedName>
        <fullName evidence="1">ATP-dependent helicase/deoxyribonuclease subunit B</fullName>
        <ecNumber evidence="1">3.1.-.-</ecNumber>
    </recommendedName>
    <alternativeName>
        <fullName evidence="1">ATP-dependent helicase/nuclease subunit AddB</fullName>
    </alternativeName>
</protein>
<organism>
    <name type="scientific">Bacillus cereus (strain Q1)</name>
    <dbReference type="NCBI Taxonomy" id="361100"/>
    <lineage>
        <taxon>Bacteria</taxon>
        <taxon>Bacillati</taxon>
        <taxon>Bacillota</taxon>
        <taxon>Bacilli</taxon>
        <taxon>Bacillales</taxon>
        <taxon>Bacillaceae</taxon>
        <taxon>Bacillus</taxon>
        <taxon>Bacillus cereus group</taxon>
    </lineage>
</organism>
<feature type="chain" id="PRO_0000379159" description="ATP-dependent helicase/deoxyribonuclease subunit B">
    <location>
        <begin position="1"/>
        <end position="1171"/>
    </location>
</feature>
<feature type="domain" description="UvrD-like helicase ATP-binding" evidence="1">
    <location>
        <begin position="1"/>
        <end position="343"/>
    </location>
</feature>
<feature type="domain" description="UvrD-like helicase C-terminal" evidence="1">
    <location>
        <begin position="281"/>
        <end position="587"/>
    </location>
</feature>
<feature type="binding site" evidence="1">
    <location>
        <begin position="8"/>
        <end position="15"/>
    </location>
    <ligand>
        <name>ATP</name>
        <dbReference type="ChEBI" id="CHEBI:30616"/>
    </ligand>
</feature>
<feature type="binding site" evidence="1">
    <location>
        <position position="805"/>
    </location>
    <ligand>
        <name>[4Fe-4S] cluster</name>
        <dbReference type="ChEBI" id="CHEBI:49883"/>
    </ligand>
</feature>
<feature type="binding site" evidence="1">
    <location>
        <position position="1129"/>
    </location>
    <ligand>
        <name>[4Fe-4S] cluster</name>
        <dbReference type="ChEBI" id="CHEBI:49883"/>
    </ligand>
</feature>
<feature type="binding site" evidence="1">
    <location>
        <position position="1132"/>
    </location>
    <ligand>
        <name>[4Fe-4S] cluster</name>
        <dbReference type="ChEBI" id="CHEBI:49883"/>
    </ligand>
</feature>
<feature type="binding site" evidence="1">
    <location>
        <position position="1138"/>
    </location>
    <ligand>
        <name>[4Fe-4S] cluster</name>
        <dbReference type="ChEBI" id="CHEBI:49883"/>
    </ligand>
</feature>
<sequence length="1171" mass="134101">MSLRFVIGRAGSGKSTLCLHEVQEELKQRPRGETILYLVPEQMTFQTQQALIGSEDVRGSIRAQVFSFSRLAWKVLQEVGGASRLHIDEAGVHMLLRKIVESRKDGLSVFQKAAEQNGFFEHLGSMIAEFKRYNVTPSNVYEMWQQLDAHSSSAEQKLLANKVYDLQLLYDDFERALIGKYLDSEDYLQLLVEKLPQSEYVKGAEIYIDGFHSFSPQELEIVRQLMICGARVTITLTIDEKTLAQPVNELDLFYETTLTYEKIKQVAREEKIEIEKTIPLMEQPRFHSPALAHLEAHYEARPNEKFNGEASVTIHTAANLRAEVEGVAREIRRLVADENYRYRDIAVLLRNGESYYDVMRTLFTDYNIPHFIDEKRPMSHHPLVECIRSALEIISGNWRYDAVFRCVKTELLYPLDVRKETMREEMDEFENYCLAYGVQGKRWTSEDPWMYRRYRSLDDTDGMITDSEREMEEKINRLRGVVRTPVIRMQKRLKRAGTVMQMCEAVYLFLEELDVPKKLEALRIRAEESGDFLFATDHEQVWEEVMSLLDTFVEMLGEEKMSLSMFTDVMSTGLEALQFANIPPSLDQVLIANIDRSRLSNVKATFVIGVNEGVIPAAPMDEGMLSDEERDVLSAAGIELAPTTRQTLLEEQFVMYQMVTRATEKLYISCPLADEEGKTLLASSFIKKIKRMFPDVKDTFITNDVNDLSRSEQISYVATPEVTLSYVMQQLQTWKRYGFEGNLDFWWDVYNFYVTSDEWKQKSSRVLSSLFYRNRAQKLSTAVSRDLYGDKIKGSVSRMELFNRCAYAHFAQHGLSLRERDIFKLDAPDIGELFHAALKRIADRLLRENRTWADLSIKECEHLSAVVIEEIAPLLQRQILLSSNRHFYLKQKLQQIIFRTSIILREHAKSSGFVPVDLEVPFGMGGTGSLPPMEFSLPNGVKMEVVGRIDRVDKAEDENGTFLRIIDYKSSSKALDLTEVYYGLALQMLTYLDVVTSNAHTWMKKGGTASPAGVLYFHIHNPIVEVKGDASEAEIEKEILKKFKMKGLVLGDADVVRLMDNKLSTGSSDIISAGLKKDGSFSARSSIASEQEFNVLQKYVHHTFENIGKDITEGVIDIAPYKKGNKAACTFCNFKSVCQFDESLEDNQFRTLKDMKDSEAMEKIREEVGGE</sequence>
<keyword id="KW-0004">4Fe-4S</keyword>
<keyword id="KW-0067">ATP-binding</keyword>
<keyword id="KW-0227">DNA damage</keyword>
<keyword id="KW-0234">DNA repair</keyword>
<keyword id="KW-0238">DNA-binding</keyword>
<keyword id="KW-0269">Exonuclease</keyword>
<keyword id="KW-0347">Helicase</keyword>
<keyword id="KW-0378">Hydrolase</keyword>
<keyword id="KW-0408">Iron</keyword>
<keyword id="KW-0411">Iron-sulfur</keyword>
<keyword id="KW-0479">Metal-binding</keyword>
<keyword id="KW-0540">Nuclease</keyword>
<keyword id="KW-0547">Nucleotide-binding</keyword>
<name>ADDB_BACCQ</name>
<accession>B9ITE8</accession>